<reference key="1">
    <citation type="journal article" date="2005" name="Genome Res.">
        <title>Living with two extremes: conclusions from the genome sequence of Natronomonas pharaonis.</title>
        <authorList>
            <person name="Falb M."/>
            <person name="Pfeiffer F."/>
            <person name="Palm P."/>
            <person name="Rodewald K."/>
            <person name="Hickmann V."/>
            <person name="Tittor J."/>
            <person name="Oesterhelt D."/>
        </authorList>
    </citation>
    <scope>NUCLEOTIDE SEQUENCE [LARGE SCALE GENOMIC DNA]</scope>
    <source>
        <strain>ATCC 35678 / DSM 2160 / CIP 103997 / JCM 8858 / NBRC 14720 / NCIMB 2260 / Gabara</strain>
    </source>
</reference>
<name>MUTS_NATPD</name>
<keyword id="KW-0067">ATP-binding</keyword>
<keyword id="KW-0227">DNA damage</keyword>
<keyword id="KW-0234">DNA repair</keyword>
<keyword id="KW-0238">DNA-binding</keyword>
<keyword id="KW-0547">Nucleotide-binding</keyword>
<keyword id="KW-1185">Reference proteome</keyword>
<dbReference type="EMBL" id="CR936257">
    <property type="protein sequence ID" value="CAI48207.1"/>
    <property type="molecule type" value="Genomic_DNA"/>
</dbReference>
<dbReference type="RefSeq" id="WP_011321846.1">
    <property type="nucleotide sequence ID" value="NC_007426.1"/>
</dbReference>
<dbReference type="SMR" id="Q3IUH3"/>
<dbReference type="STRING" id="348780.NP_0232A"/>
<dbReference type="EnsemblBacteria" id="CAI48207">
    <property type="protein sequence ID" value="CAI48207"/>
    <property type="gene ID" value="NP_0232A"/>
</dbReference>
<dbReference type="GeneID" id="3702952"/>
<dbReference type="KEGG" id="nph:NP_0232A"/>
<dbReference type="eggNOG" id="arCOG02897">
    <property type="taxonomic scope" value="Archaea"/>
</dbReference>
<dbReference type="HOGENOM" id="CLU_002472_3_1_2"/>
<dbReference type="OrthoDB" id="146065at2157"/>
<dbReference type="Proteomes" id="UP000002698">
    <property type="component" value="Chromosome"/>
</dbReference>
<dbReference type="GO" id="GO:0005524">
    <property type="term" value="F:ATP binding"/>
    <property type="evidence" value="ECO:0007669"/>
    <property type="project" value="UniProtKB-UniRule"/>
</dbReference>
<dbReference type="GO" id="GO:0140664">
    <property type="term" value="F:ATP-dependent DNA damage sensor activity"/>
    <property type="evidence" value="ECO:0007669"/>
    <property type="project" value="InterPro"/>
</dbReference>
<dbReference type="GO" id="GO:0003684">
    <property type="term" value="F:damaged DNA binding"/>
    <property type="evidence" value="ECO:0007669"/>
    <property type="project" value="UniProtKB-UniRule"/>
</dbReference>
<dbReference type="GO" id="GO:0030983">
    <property type="term" value="F:mismatched DNA binding"/>
    <property type="evidence" value="ECO:0007669"/>
    <property type="project" value="InterPro"/>
</dbReference>
<dbReference type="GO" id="GO:0006298">
    <property type="term" value="P:mismatch repair"/>
    <property type="evidence" value="ECO:0007669"/>
    <property type="project" value="UniProtKB-UniRule"/>
</dbReference>
<dbReference type="FunFam" id="1.10.1420.10:FF:000007">
    <property type="entry name" value="DNA mismatch repair protein MutS"/>
    <property type="match status" value="1"/>
</dbReference>
<dbReference type="FunFam" id="3.40.50.300:FF:000870">
    <property type="entry name" value="MutS protein homolog 4"/>
    <property type="match status" value="1"/>
</dbReference>
<dbReference type="Gene3D" id="1.10.1420.10">
    <property type="match status" value="2"/>
</dbReference>
<dbReference type="Gene3D" id="3.40.1170.10">
    <property type="entry name" value="DNA repair protein MutS, domain I"/>
    <property type="match status" value="1"/>
</dbReference>
<dbReference type="Gene3D" id="3.30.420.110">
    <property type="entry name" value="MutS, connector domain"/>
    <property type="match status" value="1"/>
</dbReference>
<dbReference type="Gene3D" id="3.40.50.300">
    <property type="entry name" value="P-loop containing nucleotide triphosphate hydrolases"/>
    <property type="match status" value="1"/>
</dbReference>
<dbReference type="HAMAP" id="MF_00096">
    <property type="entry name" value="MutS"/>
    <property type="match status" value="1"/>
</dbReference>
<dbReference type="InterPro" id="IPR005748">
    <property type="entry name" value="DNA_mismatch_repair_MutS"/>
</dbReference>
<dbReference type="InterPro" id="IPR007695">
    <property type="entry name" value="DNA_mismatch_repair_MutS-lik_N"/>
</dbReference>
<dbReference type="InterPro" id="IPR017261">
    <property type="entry name" value="DNA_mismatch_repair_MutS/MSH"/>
</dbReference>
<dbReference type="InterPro" id="IPR000432">
    <property type="entry name" value="DNA_mismatch_repair_MutS_C"/>
</dbReference>
<dbReference type="InterPro" id="IPR007861">
    <property type="entry name" value="DNA_mismatch_repair_MutS_clamp"/>
</dbReference>
<dbReference type="InterPro" id="IPR007696">
    <property type="entry name" value="DNA_mismatch_repair_MutS_core"/>
</dbReference>
<dbReference type="InterPro" id="IPR016151">
    <property type="entry name" value="DNA_mismatch_repair_MutS_N"/>
</dbReference>
<dbReference type="InterPro" id="IPR036187">
    <property type="entry name" value="DNA_mismatch_repair_MutS_sf"/>
</dbReference>
<dbReference type="InterPro" id="IPR007860">
    <property type="entry name" value="DNA_mmatch_repair_MutS_con_dom"/>
</dbReference>
<dbReference type="InterPro" id="IPR045076">
    <property type="entry name" value="MutS"/>
</dbReference>
<dbReference type="InterPro" id="IPR036678">
    <property type="entry name" value="MutS_con_dom_sf"/>
</dbReference>
<dbReference type="InterPro" id="IPR027417">
    <property type="entry name" value="P-loop_NTPase"/>
</dbReference>
<dbReference type="NCBIfam" id="TIGR01070">
    <property type="entry name" value="mutS1"/>
    <property type="match status" value="1"/>
</dbReference>
<dbReference type="NCBIfam" id="NF003810">
    <property type="entry name" value="PRK05399.1"/>
    <property type="match status" value="1"/>
</dbReference>
<dbReference type="PANTHER" id="PTHR11361:SF34">
    <property type="entry name" value="DNA MISMATCH REPAIR PROTEIN MSH1, MITOCHONDRIAL"/>
    <property type="match status" value="1"/>
</dbReference>
<dbReference type="PANTHER" id="PTHR11361">
    <property type="entry name" value="DNA MISMATCH REPAIR PROTEIN MUTS FAMILY MEMBER"/>
    <property type="match status" value="1"/>
</dbReference>
<dbReference type="Pfam" id="PF01624">
    <property type="entry name" value="MutS_I"/>
    <property type="match status" value="1"/>
</dbReference>
<dbReference type="Pfam" id="PF05188">
    <property type="entry name" value="MutS_II"/>
    <property type="match status" value="1"/>
</dbReference>
<dbReference type="Pfam" id="PF05192">
    <property type="entry name" value="MutS_III"/>
    <property type="match status" value="1"/>
</dbReference>
<dbReference type="Pfam" id="PF05190">
    <property type="entry name" value="MutS_IV"/>
    <property type="match status" value="1"/>
</dbReference>
<dbReference type="Pfam" id="PF00488">
    <property type="entry name" value="MutS_V"/>
    <property type="match status" value="1"/>
</dbReference>
<dbReference type="PIRSF" id="PIRSF037677">
    <property type="entry name" value="DNA_mis_repair_Msh6"/>
    <property type="match status" value="1"/>
</dbReference>
<dbReference type="SMART" id="SM00534">
    <property type="entry name" value="MUTSac"/>
    <property type="match status" value="1"/>
</dbReference>
<dbReference type="SMART" id="SM00533">
    <property type="entry name" value="MUTSd"/>
    <property type="match status" value="1"/>
</dbReference>
<dbReference type="SUPFAM" id="SSF55271">
    <property type="entry name" value="DNA repair protein MutS, domain I"/>
    <property type="match status" value="1"/>
</dbReference>
<dbReference type="SUPFAM" id="SSF53150">
    <property type="entry name" value="DNA repair protein MutS, domain II"/>
    <property type="match status" value="1"/>
</dbReference>
<dbReference type="SUPFAM" id="SSF48334">
    <property type="entry name" value="DNA repair protein MutS, domain III"/>
    <property type="match status" value="1"/>
</dbReference>
<dbReference type="SUPFAM" id="SSF52540">
    <property type="entry name" value="P-loop containing nucleoside triphosphate hydrolases"/>
    <property type="match status" value="1"/>
</dbReference>
<dbReference type="PROSITE" id="PS00486">
    <property type="entry name" value="DNA_MISMATCH_REPAIR_2"/>
    <property type="match status" value="1"/>
</dbReference>
<evidence type="ECO:0000255" key="1">
    <source>
        <dbReference type="HAMAP-Rule" id="MF_00096"/>
    </source>
</evidence>
<protein>
    <recommendedName>
        <fullName evidence="1">DNA mismatch repair protein MutS</fullName>
    </recommendedName>
</protein>
<proteinExistence type="inferred from homology"/>
<comment type="function">
    <text evidence="1">This protein is involved in the repair of mismatches in DNA. It is possible that it carries out the mismatch recognition step. This protein has a weak ATPase activity.</text>
</comment>
<comment type="similarity">
    <text evidence="1">Belongs to the DNA mismatch repair MutS family.</text>
</comment>
<gene>
    <name evidence="1" type="primary">mutS</name>
    <name type="ordered locus">NP_0232A</name>
</gene>
<sequence>MDEALGPPPAMAEKADELTPMLSQYLELCERYDDALVLFQVGDFYETFCEAAETTARLLEITLTQREDSTGTYPMAGIPIDNAESYIETLLDAGYRVAVADQVEAAEAASGLVDRAVTRVVTPGTLTETELLAEADNNFVACLTDGYGLALLDVSTGDCYATRLDRTAGVADELERFDPAEAVVGPDAPTDCFGEDCMVTPYERSAFELDAARERVEAYFGSTALASDAEIRACGALLAYAEYARGTTTDGETEPLDYINQLTRYDPREYMLLDAVAVRSLEIFEPRHVHGLEGAALVETLDETASALGGRELRDWLRRPLLDADRIERRLDAVEALVERVSDRERASERLADVYDLERLVAAVSRGRADARDLRALESTLSVVPELRACLDDAAGESEKLASVRERLDDCTAVRELIDRAIVDSPPVEITEGGVIRDGYDERLDELRATERDGKAWIDDLEAKERERTGIDSLKVGHNSVHGYYIEVTNPNLDAVPDDYQRRQTLKNSERFYTPELKEREDEIIRAEDRADELEYERFRSVREEVAAATERIQETARAVAELDVLCALATVAAQYDYCRPTVDADGIYIEGGRHPVVERTESSFVPNPTDLPATEPLAVITGPNMSGKSTYMRQVALTSVLTQLGSFVPAERAAVPIFDRVFTRVGASDDIAGGRSTFMVEMTELSTILDAADGRSLVVLDEVGRGTSTRDGYAIAQATTEYLHDEAGAFTLFATHHHELTDVAAELPQARNYHFAAARTADGVEFDHDLRPGAAEASYGVEVAEMAGVPEAVVDRADELLGGMRSNDTPPAAAASTDGGRVPEALLAELEAVDLAETTPLEALNLLSRLKSQLD</sequence>
<accession>Q3IUH3</accession>
<feature type="chain" id="PRO_0000224425" description="DNA mismatch repair protein MutS">
    <location>
        <begin position="1"/>
        <end position="856"/>
    </location>
</feature>
<feature type="binding site" evidence="1">
    <location>
        <begin position="623"/>
        <end position="630"/>
    </location>
    <ligand>
        <name>ATP</name>
        <dbReference type="ChEBI" id="CHEBI:30616"/>
    </ligand>
</feature>
<organism>
    <name type="scientific">Natronomonas pharaonis (strain ATCC 35678 / DSM 2160 / CIP 103997 / JCM 8858 / NBRC 14720 / NCIMB 2260 / Gabara)</name>
    <name type="common">Halobacterium pharaonis</name>
    <dbReference type="NCBI Taxonomy" id="348780"/>
    <lineage>
        <taxon>Archaea</taxon>
        <taxon>Methanobacteriati</taxon>
        <taxon>Methanobacteriota</taxon>
        <taxon>Stenosarchaea group</taxon>
        <taxon>Halobacteria</taxon>
        <taxon>Halobacteriales</taxon>
        <taxon>Haloarculaceae</taxon>
        <taxon>Natronomonas</taxon>
    </lineage>
</organism>